<comment type="function">
    <text evidence="1">Catalyzes the formation of a hydroxyacyl-CoA by addition of water on enoyl-CoA. Also exhibits 3-hydroxyacyl-CoA epimerase and 3-hydroxyacyl-CoA dehydrogenase activities.</text>
</comment>
<comment type="catalytic activity">
    <reaction evidence="1">
        <text>a (3S)-3-hydroxyacyl-CoA = a (2E)-enoyl-CoA + H2O</text>
        <dbReference type="Rhea" id="RHEA:16105"/>
        <dbReference type="ChEBI" id="CHEBI:15377"/>
        <dbReference type="ChEBI" id="CHEBI:57318"/>
        <dbReference type="ChEBI" id="CHEBI:58856"/>
        <dbReference type="EC" id="4.2.1.17"/>
    </reaction>
</comment>
<comment type="catalytic activity">
    <reaction evidence="1">
        <text>a 4-saturated-(3S)-3-hydroxyacyl-CoA = a (3E)-enoyl-CoA + H2O</text>
        <dbReference type="Rhea" id="RHEA:20724"/>
        <dbReference type="ChEBI" id="CHEBI:15377"/>
        <dbReference type="ChEBI" id="CHEBI:58521"/>
        <dbReference type="ChEBI" id="CHEBI:137480"/>
        <dbReference type="EC" id="4.2.1.17"/>
    </reaction>
</comment>
<comment type="catalytic activity">
    <reaction evidence="1">
        <text>a (3S)-3-hydroxyacyl-CoA + NAD(+) = a 3-oxoacyl-CoA + NADH + H(+)</text>
        <dbReference type="Rhea" id="RHEA:22432"/>
        <dbReference type="ChEBI" id="CHEBI:15378"/>
        <dbReference type="ChEBI" id="CHEBI:57318"/>
        <dbReference type="ChEBI" id="CHEBI:57540"/>
        <dbReference type="ChEBI" id="CHEBI:57945"/>
        <dbReference type="ChEBI" id="CHEBI:90726"/>
        <dbReference type="EC" id="1.1.1.35"/>
    </reaction>
</comment>
<comment type="catalytic activity">
    <reaction evidence="1">
        <text>(3S)-3-hydroxybutanoyl-CoA = (3R)-3-hydroxybutanoyl-CoA</text>
        <dbReference type="Rhea" id="RHEA:21760"/>
        <dbReference type="ChEBI" id="CHEBI:57315"/>
        <dbReference type="ChEBI" id="CHEBI:57316"/>
        <dbReference type="EC" id="5.1.2.3"/>
    </reaction>
</comment>
<comment type="pathway">
    <text evidence="1">Lipid metabolism; fatty acid beta-oxidation.</text>
</comment>
<comment type="subunit">
    <text evidence="1">Heterotetramer of two alpha chains (FadJ) and two beta chains (FadI).</text>
</comment>
<comment type="subcellular location">
    <subcellularLocation>
        <location evidence="1">Cytoplasm</location>
    </subcellularLocation>
</comment>
<comment type="similarity">
    <text evidence="1">In the N-terminal section; belongs to the enoyl-CoA hydratase/isomerase family.</text>
</comment>
<comment type="similarity">
    <text evidence="1">In the central section; belongs to the 3-hydroxyacyl-CoA dehydrogenase family.</text>
</comment>
<organism>
    <name type="scientific">Escherichia fergusonii (strain ATCC 35469 / DSM 13698 / CCUG 18766 / IAM 14443 / JCM 21226 / LMG 7866 / NBRC 102419 / NCTC 12128 / CDC 0568-73)</name>
    <dbReference type="NCBI Taxonomy" id="585054"/>
    <lineage>
        <taxon>Bacteria</taxon>
        <taxon>Pseudomonadati</taxon>
        <taxon>Pseudomonadota</taxon>
        <taxon>Gammaproteobacteria</taxon>
        <taxon>Enterobacterales</taxon>
        <taxon>Enterobacteriaceae</taxon>
        <taxon>Escherichia</taxon>
    </lineage>
</organism>
<gene>
    <name evidence="1" type="primary">fadJ</name>
    <name type="ordered locus">EFER_0823</name>
</gene>
<dbReference type="EC" id="4.2.1.17" evidence="1"/>
<dbReference type="EC" id="5.1.2.3" evidence="1"/>
<dbReference type="EC" id="1.1.1.35" evidence="1"/>
<dbReference type="EMBL" id="CU928158">
    <property type="protein sequence ID" value="CAQ88359.1"/>
    <property type="molecule type" value="Genomic_DNA"/>
</dbReference>
<dbReference type="RefSeq" id="WP_000367675.1">
    <property type="nucleotide sequence ID" value="NC_011740.1"/>
</dbReference>
<dbReference type="SMR" id="B7LLD0"/>
<dbReference type="GeneID" id="75058116"/>
<dbReference type="KEGG" id="efe:EFER_0823"/>
<dbReference type="HOGENOM" id="CLU_009834_16_3_6"/>
<dbReference type="OrthoDB" id="5389341at2"/>
<dbReference type="UniPathway" id="UPA00659"/>
<dbReference type="Proteomes" id="UP000000745">
    <property type="component" value="Chromosome"/>
</dbReference>
<dbReference type="GO" id="GO:0005737">
    <property type="term" value="C:cytoplasm"/>
    <property type="evidence" value="ECO:0007669"/>
    <property type="project" value="UniProtKB-SubCell"/>
</dbReference>
<dbReference type="GO" id="GO:0008692">
    <property type="term" value="F:3-hydroxybutyryl-CoA epimerase activity"/>
    <property type="evidence" value="ECO:0007669"/>
    <property type="project" value="UniProtKB-UniRule"/>
</dbReference>
<dbReference type="GO" id="GO:0004300">
    <property type="term" value="F:enoyl-CoA hydratase activity"/>
    <property type="evidence" value="ECO:0007669"/>
    <property type="project" value="UniProtKB-UniRule"/>
</dbReference>
<dbReference type="GO" id="GO:0016509">
    <property type="term" value="F:long-chain-3-hydroxyacyl-CoA dehydrogenase activity"/>
    <property type="evidence" value="ECO:0007669"/>
    <property type="project" value="TreeGrafter"/>
</dbReference>
<dbReference type="GO" id="GO:0070403">
    <property type="term" value="F:NAD+ binding"/>
    <property type="evidence" value="ECO:0007669"/>
    <property type="project" value="InterPro"/>
</dbReference>
<dbReference type="GO" id="GO:0006635">
    <property type="term" value="P:fatty acid beta-oxidation"/>
    <property type="evidence" value="ECO:0007669"/>
    <property type="project" value="UniProtKB-UniRule"/>
</dbReference>
<dbReference type="CDD" id="cd06558">
    <property type="entry name" value="crotonase-like"/>
    <property type="match status" value="1"/>
</dbReference>
<dbReference type="FunFam" id="1.10.1040.50:FF:000003">
    <property type="entry name" value="Fatty acid oxidation complex subunit alpha"/>
    <property type="match status" value="1"/>
</dbReference>
<dbReference type="FunFam" id="3.90.226.10:FF:000011">
    <property type="entry name" value="Fatty acid oxidation complex subunit alpha"/>
    <property type="match status" value="1"/>
</dbReference>
<dbReference type="FunFam" id="3.40.50.720:FF:000009">
    <property type="entry name" value="Fatty oxidation complex, alpha subunit"/>
    <property type="match status" value="1"/>
</dbReference>
<dbReference type="Gene3D" id="1.10.1040.50">
    <property type="match status" value="1"/>
</dbReference>
<dbReference type="Gene3D" id="3.90.226.10">
    <property type="entry name" value="2-enoyl-CoA Hydratase, Chain A, domain 1"/>
    <property type="match status" value="1"/>
</dbReference>
<dbReference type="Gene3D" id="3.40.50.720">
    <property type="entry name" value="NAD(P)-binding Rossmann-like Domain"/>
    <property type="match status" value="1"/>
</dbReference>
<dbReference type="HAMAP" id="MF_01617">
    <property type="entry name" value="FadJ"/>
    <property type="match status" value="1"/>
</dbReference>
<dbReference type="InterPro" id="IPR006180">
    <property type="entry name" value="3-OHacyl-CoA_DH_CS"/>
</dbReference>
<dbReference type="InterPro" id="IPR006176">
    <property type="entry name" value="3-OHacyl-CoA_DH_NAD-bd"/>
</dbReference>
<dbReference type="InterPro" id="IPR006108">
    <property type="entry name" value="3HC_DH_C"/>
</dbReference>
<dbReference type="InterPro" id="IPR008927">
    <property type="entry name" value="6-PGluconate_DH-like_C_sf"/>
</dbReference>
<dbReference type="InterPro" id="IPR029045">
    <property type="entry name" value="ClpP/crotonase-like_dom_sf"/>
</dbReference>
<dbReference type="InterPro" id="IPR001753">
    <property type="entry name" value="Enoyl-CoA_hydra/iso"/>
</dbReference>
<dbReference type="InterPro" id="IPR050136">
    <property type="entry name" value="FA_oxidation_alpha_subunit"/>
</dbReference>
<dbReference type="InterPro" id="IPR012802">
    <property type="entry name" value="FadJ"/>
</dbReference>
<dbReference type="InterPro" id="IPR036291">
    <property type="entry name" value="NAD(P)-bd_dom_sf"/>
</dbReference>
<dbReference type="NCBIfam" id="TIGR02440">
    <property type="entry name" value="FadJ"/>
    <property type="match status" value="1"/>
</dbReference>
<dbReference type="NCBIfam" id="NF008363">
    <property type="entry name" value="PRK11154.1"/>
    <property type="match status" value="1"/>
</dbReference>
<dbReference type="PANTHER" id="PTHR43612">
    <property type="entry name" value="TRIFUNCTIONAL ENZYME SUBUNIT ALPHA"/>
    <property type="match status" value="1"/>
</dbReference>
<dbReference type="PANTHER" id="PTHR43612:SF3">
    <property type="entry name" value="TRIFUNCTIONAL ENZYME SUBUNIT ALPHA, MITOCHONDRIAL"/>
    <property type="match status" value="1"/>
</dbReference>
<dbReference type="Pfam" id="PF00725">
    <property type="entry name" value="3HCDH"/>
    <property type="match status" value="1"/>
</dbReference>
<dbReference type="Pfam" id="PF02737">
    <property type="entry name" value="3HCDH_N"/>
    <property type="match status" value="1"/>
</dbReference>
<dbReference type="Pfam" id="PF00378">
    <property type="entry name" value="ECH_1"/>
    <property type="match status" value="1"/>
</dbReference>
<dbReference type="SUPFAM" id="SSF48179">
    <property type="entry name" value="6-phosphogluconate dehydrogenase C-terminal domain-like"/>
    <property type="match status" value="2"/>
</dbReference>
<dbReference type="SUPFAM" id="SSF52096">
    <property type="entry name" value="ClpP/crotonase"/>
    <property type="match status" value="1"/>
</dbReference>
<dbReference type="SUPFAM" id="SSF51735">
    <property type="entry name" value="NAD(P)-binding Rossmann-fold domains"/>
    <property type="match status" value="1"/>
</dbReference>
<dbReference type="PROSITE" id="PS00067">
    <property type="entry name" value="3HCDH"/>
    <property type="match status" value="1"/>
</dbReference>
<accession>B7LLD0</accession>
<keyword id="KW-0963">Cytoplasm</keyword>
<keyword id="KW-0276">Fatty acid metabolism</keyword>
<keyword id="KW-0413">Isomerase</keyword>
<keyword id="KW-0442">Lipid degradation</keyword>
<keyword id="KW-0443">Lipid metabolism</keyword>
<keyword id="KW-0456">Lyase</keyword>
<keyword id="KW-0511">Multifunctional enzyme</keyword>
<keyword id="KW-0520">NAD</keyword>
<keyword id="KW-0560">Oxidoreductase</keyword>
<feature type="chain" id="PRO_1000185945" description="Fatty acid oxidation complex subunit alpha">
    <location>
        <begin position="1"/>
        <end position="714"/>
    </location>
</feature>
<feature type="region of interest" description="Enoyl-CoA hydratase" evidence="1">
    <location>
        <begin position="1"/>
        <end position="190"/>
    </location>
</feature>
<feature type="region of interest" description="3-hydroxyacyl-CoA dehydrogenase" evidence="1">
    <location>
        <begin position="306"/>
        <end position="714"/>
    </location>
</feature>
<feature type="site" description="Important for catalytic activity" evidence="1">
    <location>
        <position position="118"/>
    </location>
</feature>
<feature type="site" description="Important for catalytic activity" evidence="1">
    <location>
        <position position="140"/>
    </location>
</feature>
<protein>
    <recommendedName>
        <fullName evidence="1">Fatty acid oxidation complex subunit alpha</fullName>
    </recommendedName>
    <domain>
        <recommendedName>
            <fullName evidence="1">Enoyl-CoA hydratase/3-hydroxybutyryl-CoA epimerase</fullName>
            <ecNumber evidence="1">4.2.1.17</ecNumber>
            <ecNumber evidence="1">5.1.2.3</ecNumber>
        </recommendedName>
    </domain>
    <domain>
        <recommendedName>
            <fullName evidence="1">3-hydroxyacyl-CoA dehydrogenase</fullName>
            <ecNumber evidence="1">1.1.1.35</ecNumber>
        </recommendedName>
    </domain>
</protein>
<evidence type="ECO:0000255" key="1">
    <source>
        <dbReference type="HAMAP-Rule" id="MF_01617"/>
    </source>
</evidence>
<sequence>MDMTSAFTLNVRLDHIAVVTIDVPGEKMNTLKAEFAAQVRAILKEIRENKEIRGVVFISAKADNFIAGADINMIDHCNTAMEAETLARQGQQLMAEIHALPVPVIAAIHGACLGGGLELALACHGRICTDDPKTILGLPEVQLGLLPGSGGTQRLPRLVGLSTALDMILTGKQLRPGQALKSGLVDEIVPQSILLQAAVERAKQERQTPRSLPVRERILAGPLGRSLLFRFVSKKTDQKTQGNYPATTRILDVIETGLSQGSSSGYDAEARAFGELAMTSQSQSLRNIFFASTEVKKDPGSTVQPGTLDSIGILGGGLMGGGIAFVTACKAGLPVRIKDINPQGINHALKYSWQLLDAKVRRRHIKAGEQARQLAKISGTTDYQGFAHRDVVIEAVFEDLSLKQQMVAEVEKNCGLHTIFASNTSSIPISDIAAHATRPEQVIGLHFFSPVEKMPLVEVIPHAATSEKTIATIVKLAKKQGKTPIVVQDKAGFYVNRILAPYINEAIRLLTEGEKVETIDTALVKFGFPVGPIQLLDEVGIDTGTKIIPVLEAAYGERFSAPANVVSSILNDDRKGRKNGRGFYLYGAKGRKSKKQVDPEIYKIIAVQGQSKLSAQQITERCVMLMLNEAARCYREGVIRHARDGDIGAVFGIGFPPFLGGPFRYMDSLGASEVVAVLQRLTSLYGSRFTPCEQLLQMAERGESFWKTSATDRH</sequence>
<reference key="1">
    <citation type="journal article" date="2009" name="PLoS Genet.">
        <title>Organised genome dynamics in the Escherichia coli species results in highly diverse adaptive paths.</title>
        <authorList>
            <person name="Touchon M."/>
            <person name="Hoede C."/>
            <person name="Tenaillon O."/>
            <person name="Barbe V."/>
            <person name="Baeriswyl S."/>
            <person name="Bidet P."/>
            <person name="Bingen E."/>
            <person name="Bonacorsi S."/>
            <person name="Bouchier C."/>
            <person name="Bouvet O."/>
            <person name="Calteau A."/>
            <person name="Chiapello H."/>
            <person name="Clermont O."/>
            <person name="Cruveiller S."/>
            <person name="Danchin A."/>
            <person name="Diard M."/>
            <person name="Dossat C."/>
            <person name="Karoui M.E."/>
            <person name="Frapy E."/>
            <person name="Garry L."/>
            <person name="Ghigo J.M."/>
            <person name="Gilles A.M."/>
            <person name="Johnson J."/>
            <person name="Le Bouguenec C."/>
            <person name="Lescat M."/>
            <person name="Mangenot S."/>
            <person name="Martinez-Jehanne V."/>
            <person name="Matic I."/>
            <person name="Nassif X."/>
            <person name="Oztas S."/>
            <person name="Petit M.A."/>
            <person name="Pichon C."/>
            <person name="Rouy Z."/>
            <person name="Ruf C.S."/>
            <person name="Schneider D."/>
            <person name="Tourret J."/>
            <person name="Vacherie B."/>
            <person name="Vallenet D."/>
            <person name="Medigue C."/>
            <person name="Rocha E.P.C."/>
            <person name="Denamur E."/>
        </authorList>
    </citation>
    <scope>NUCLEOTIDE SEQUENCE [LARGE SCALE GENOMIC DNA]</scope>
    <source>
        <strain>ATCC 35469 / DSM 13698 / BCRC 15582 / CCUG 18766 / IAM 14443 / JCM 21226 / LMG 7866 / NBRC 102419 / NCTC 12128 / CDC 0568-73</strain>
    </source>
</reference>
<proteinExistence type="inferred from homology"/>
<name>FADJ_ESCF3</name>